<proteinExistence type="evidence at transcript level"/>
<feature type="chain" id="PRO_0000248477" description="Taste receptor type 2 member 117">
    <location>
        <begin position="1"/>
        <end position="330"/>
    </location>
</feature>
<feature type="topological domain" description="Extracellular" evidence="1">
    <location>
        <begin position="1"/>
        <end position="16"/>
    </location>
</feature>
<feature type="transmembrane region" description="Helical; Name=1" evidence="1">
    <location>
        <begin position="17"/>
        <end position="37"/>
    </location>
</feature>
<feature type="topological domain" description="Cytoplasmic" evidence="1">
    <location>
        <begin position="38"/>
        <end position="53"/>
    </location>
</feature>
<feature type="transmembrane region" description="Helical; Name=2" evidence="1">
    <location>
        <begin position="54"/>
        <end position="74"/>
    </location>
</feature>
<feature type="topological domain" description="Extracellular" evidence="1">
    <location>
        <begin position="75"/>
        <end position="95"/>
    </location>
</feature>
<feature type="transmembrane region" description="Helical; Name=3" evidence="1">
    <location>
        <begin position="96"/>
        <end position="116"/>
    </location>
</feature>
<feature type="topological domain" description="Cytoplasmic" evidence="1">
    <location>
        <begin position="117"/>
        <end position="135"/>
    </location>
</feature>
<feature type="transmembrane region" description="Helical; Name=4" evidence="1">
    <location>
        <begin position="136"/>
        <end position="156"/>
    </location>
</feature>
<feature type="topological domain" description="Extracellular" evidence="1">
    <location>
        <begin position="157"/>
        <end position="190"/>
    </location>
</feature>
<feature type="transmembrane region" description="Helical; Name=5" evidence="1">
    <location>
        <begin position="191"/>
        <end position="211"/>
    </location>
</feature>
<feature type="topological domain" description="Cytoplasmic" evidence="1">
    <location>
        <begin position="212"/>
        <end position="239"/>
    </location>
</feature>
<feature type="transmembrane region" description="Helical; Name=6" evidence="1">
    <location>
        <begin position="240"/>
        <end position="260"/>
    </location>
</feature>
<feature type="topological domain" description="Extracellular" evidence="1">
    <location>
        <begin position="261"/>
        <end position="269"/>
    </location>
</feature>
<feature type="transmembrane region" description="Helical; Name=7" evidence="1">
    <location>
        <begin position="270"/>
        <end position="290"/>
    </location>
</feature>
<feature type="topological domain" description="Cytoplasmic" evidence="1">
    <location>
        <begin position="291"/>
        <end position="330"/>
    </location>
</feature>
<feature type="glycosylation site" description="N-linked (GlcNAc...) asparagine" evidence="1">
    <location>
        <position position="76"/>
    </location>
</feature>
<feature type="glycosylation site" description="N-linked (GlcNAc...) asparagine" evidence="1">
    <location>
        <position position="169"/>
    </location>
</feature>
<accession>Q7M715</accession>
<accession>A2RSQ6</accession>
<organism>
    <name type="scientific">Mus musculus</name>
    <name type="common">Mouse</name>
    <dbReference type="NCBI Taxonomy" id="10090"/>
    <lineage>
        <taxon>Eukaryota</taxon>
        <taxon>Metazoa</taxon>
        <taxon>Chordata</taxon>
        <taxon>Craniata</taxon>
        <taxon>Vertebrata</taxon>
        <taxon>Euteleostomi</taxon>
        <taxon>Mammalia</taxon>
        <taxon>Eutheria</taxon>
        <taxon>Euarchontoglires</taxon>
        <taxon>Glires</taxon>
        <taxon>Rodentia</taxon>
        <taxon>Myomorpha</taxon>
        <taxon>Muroidea</taxon>
        <taxon>Muridae</taxon>
        <taxon>Murinae</taxon>
        <taxon>Mus</taxon>
        <taxon>Mus</taxon>
    </lineage>
</organism>
<keyword id="KW-0297">G-protein coupled receptor</keyword>
<keyword id="KW-0325">Glycoprotein</keyword>
<keyword id="KW-0472">Membrane</keyword>
<keyword id="KW-0675">Receptor</keyword>
<keyword id="KW-1185">Reference proteome</keyword>
<keyword id="KW-0716">Sensory transduction</keyword>
<keyword id="KW-0919">Taste</keyword>
<keyword id="KW-0807">Transducer</keyword>
<keyword id="KW-0812">Transmembrane</keyword>
<keyword id="KW-1133">Transmembrane helix</keyword>
<name>TR117_MOUSE</name>
<evidence type="ECO:0000255" key="1"/>
<evidence type="ECO:0000303" key="2">
    <source>
    </source>
</evidence>
<evidence type="ECO:0000305" key="3"/>
<evidence type="ECO:0000312" key="4">
    <source>
        <dbReference type="EMBL" id="DAA01221.1"/>
    </source>
</evidence>
<evidence type="ECO:0000312" key="5">
    <source>
        <dbReference type="MGI" id="MGI:2681242"/>
    </source>
</evidence>
<gene>
    <name evidence="5" type="primary">Tas2r117</name>
    <name evidence="2" type="synonym">T2r54</name>
</gene>
<comment type="function">
    <text evidence="3">Putative taste receptor which may play a role in the perception of bitterness.</text>
</comment>
<comment type="subcellular location">
    <subcellularLocation>
        <location evidence="3">Membrane</location>
        <topology evidence="3">Multi-pass membrane protein</topology>
    </subcellularLocation>
</comment>
<comment type="miscellaneous">
    <text evidence="3">Several bitter taste receptors are expressed in a single taste receptor cell.</text>
</comment>
<comment type="similarity">
    <text evidence="1">Belongs to the G-protein coupled receptor T2R family.</text>
</comment>
<protein>
    <recommendedName>
        <fullName>Taste receptor type 2 member 117</fullName>
        <shortName>T2R117</shortName>
        <shortName>mT2R54</shortName>
    </recommendedName>
</protein>
<reference key="1">
    <citation type="journal article" date="2009" name="PLoS Biol.">
        <title>Lineage-specific biology revealed by a finished genome assembly of the mouse.</title>
        <authorList>
            <person name="Church D.M."/>
            <person name="Goodstadt L."/>
            <person name="Hillier L.W."/>
            <person name="Zody M.C."/>
            <person name="Goldstein S."/>
            <person name="She X."/>
            <person name="Bult C.J."/>
            <person name="Agarwala R."/>
            <person name="Cherry J.L."/>
            <person name="DiCuccio M."/>
            <person name="Hlavina W."/>
            <person name="Kapustin Y."/>
            <person name="Meric P."/>
            <person name="Maglott D."/>
            <person name="Birtle Z."/>
            <person name="Marques A.C."/>
            <person name="Graves T."/>
            <person name="Zhou S."/>
            <person name="Teague B."/>
            <person name="Potamousis K."/>
            <person name="Churas C."/>
            <person name="Place M."/>
            <person name="Herschleb J."/>
            <person name="Runnheim R."/>
            <person name="Forrest D."/>
            <person name="Amos-Landgraf J."/>
            <person name="Schwartz D.C."/>
            <person name="Cheng Z."/>
            <person name="Lindblad-Toh K."/>
            <person name="Eichler E.E."/>
            <person name="Ponting C.P."/>
        </authorList>
    </citation>
    <scope>NUCLEOTIDE SEQUENCE [LARGE SCALE GENOMIC DNA]</scope>
    <source>
        <strain>C57BL/6J</strain>
    </source>
</reference>
<reference key="2">
    <citation type="journal article" date="2004" name="Genome Res.">
        <title>The status, quality, and expansion of the NIH full-length cDNA project: the Mammalian Gene Collection (MGC).</title>
        <authorList>
            <consortium name="The MGC Project Team"/>
        </authorList>
    </citation>
    <scope>NUCLEOTIDE SEQUENCE [LARGE SCALE MRNA]</scope>
    <source>
        <tissue>Brain</tissue>
    </source>
</reference>
<reference evidence="3 4" key="3">
    <citation type="journal article" date="2003" name="Mol. Biol. Evol.">
        <title>Adaptive diversification of bitter taste receptor genes in mammalian evolution.</title>
        <authorList>
            <person name="Shi P."/>
            <person name="Zhang J."/>
            <person name="Yang H."/>
            <person name="Zhang Y.-P."/>
        </authorList>
    </citation>
    <scope>IDENTIFICATION</scope>
</reference>
<sequence length="330" mass="38528">MKHFWKILSVISQSTLSVILIVELVIGIIGNGFMVLVHCMDWVKKKKMSLVNQILTALSISRIFQLCLLFISLVINFSYTDLTTSSRMIQVMYNAWILANHFSIWIATCLTVLYFLKIANFSNSFFLYLKWRVEKVVSVTLLVSLLLLILNILLTNLETDMWTNEYQRNISCSFSSHYYAKCHRQVLRLHIIFLSVPVVLSLSTFLLLIFSLWTHHKRMQQHVQGGRDARTTAHFKALQTVIAFFLLYSIFILSVLIQIWKYELLKKNLFVVFCEVVYIAFPTFHSYILIVGDMKLRQACLPLCIIAAEIQTTLCRNFRSLKYFRLCCIF</sequence>
<dbReference type="EMBL" id="AC129318">
    <property type="status" value="NOT_ANNOTATED_CDS"/>
    <property type="molecule type" value="Genomic_DNA"/>
</dbReference>
<dbReference type="EMBL" id="BC132206">
    <property type="protein sequence ID" value="AAI32207.1"/>
    <property type="molecule type" value="mRNA"/>
</dbReference>
<dbReference type="EMBL" id="BC132208">
    <property type="protein sequence ID" value="AAI32209.1"/>
    <property type="molecule type" value="mRNA"/>
</dbReference>
<dbReference type="EMBL" id="BK001082">
    <property type="protein sequence ID" value="DAA01221.1"/>
    <property type="molecule type" value="Genomic_DNA"/>
</dbReference>
<dbReference type="CCDS" id="CCDS20623.1"/>
<dbReference type="RefSeq" id="NP_996904.1">
    <property type="nucleotide sequence ID" value="NM_207021.1"/>
</dbReference>
<dbReference type="SMR" id="Q7M715"/>
<dbReference type="FunCoup" id="Q7M715">
    <property type="interactions" value="88"/>
</dbReference>
<dbReference type="STRING" id="10090.ENSMUSP00000069768"/>
<dbReference type="GlyCosmos" id="Q7M715">
    <property type="glycosylation" value="2 sites, No reported glycans"/>
</dbReference>
<dbReference type="GlyGen" id="Q7M715">
    <property type="glycosylation" value="2 sites"/>
</dbReference>
<dbReference type="PaxDb" id="10090-ENSMUSP00000069768"/>
<dbReference type="Ensembl" id="ENSMUST00000068302.4">
    <property type="protein sequence ID" value="ENSMUSP00000069768.4"/>
    <property type="gene ID" value="ENSMUSG00000058349.3"/>
</dbReference>
<dbReference type="GeneID" id="353166"/>
<dbReference type="KEGG" id="mmu:353166"/>
<dbReference type="UCSC" id="uc009ejp.1">
    <property type="organism name" value="mouse"/>
</dbReference>
<dbReference type="AGR" id="MGI:2681242"/>
<dbReference type="CTD" id="353166"/>
<dbReference type="MGI" id="MGI:2681242">
    <property type="gene designation" value="Tas2r117"/>
</dbReference>
<dbReference type="VEuPathDB" id="HostDB:ENSMUSG00000058349"/>
<dbReference type="eggNOG" id="ENOG502SKRK">
    <property type="taxonomic scope" value="Eukaryota"/>
</dbReference>
<dbReference type="GeneTree" id="ENSGT01100000263477"/>
<dbReference type="HOGENOM" id="CLU_072337_3_0_1"/>
<dbReference type="InParanoid" id="Q7M715"/>
<dbReference type="OrthoDB" id="8876749at2759"/>
<dbReference type="PhylomeDB" id="Q7M715"/>
<dbReference type="TreeFam" id="TF335891"/>
<dbReference type="BioGRID-ORCS" id="353166">
    <property type="hits" value="3 hits in 75 CRISPR screens"/>
</dbReference>
<dbReference type="PRO" id="PR:Q7M715"/>
<dbReference type="Proteomes" id="UP000000589">
    <property type="component" value="Chromosome 6"/>
</dbReference>
<dbReference type="RNAct" id="Q7M715">
    <property type="molecule type" value="protein"/>
</dbReference>
<dbReference type="GO" id="GO:0016020">
    <property type="term" value="C:membrane"/>
    <property type="evidence" value="ECO:0007669"/>
    <property type="project" value="UniProtKB-SubCell"/>
</dbReference>
<dbReference type="GO" id="GO:0033038">
    <property type="term" value="F:bitter taste receptor activity"/>
    <property type="evidence" value="ECO:0007669"/>
    <property type="project" value="InterPro"/>
</dbReference>
<dbReference type="GO" id="GO:0004930">
    <property type="term" value="F:G protein-coupled receptor activity"/>
    <property type="evidence" value="ECO:0007669"/>
    <property type="project" value="UniProtKB-KW"/>
</dbReference>
<dbReference type="CDD" id="cd15019">
    <property type="entry name" value="7tm_TAS2R14-like"/>
    <property type="match status" value="1"/>
</dbReference>
<dbReference type="FunFam" id="1.20.1070.10:FF:000042">
    <property type="entry name" value="Taste receptor type 2 member 7"/>
    <property type="match status" value="1"/>
</dbReference>
<dbReference type="Gene3D" id="1.20.1070.10">
    <property type="entry name" value="Rhodopsin 7-helix transmembrane proteins"/>
    <property type="match status" value="1"/>
</dbReference>
<dbReference type="InterPro" id="IPR017452">
    <property type="entry name" value="GPCR_Rhodpsn_7TM"/>
</dbReference>
<dbReference type="InterPro" id="IPR007960">
    <property type="entry name" value="TAS2R"/>
</dbReference>
<dbReference type="PANTHER" id="PTHR11394">
    <property type="entry name" value="TASTE RECEPTOR TYPE 2"/>
    <property type="match status" value="1"/>
</dbReference>
<dbReference type="PANTHER" id="PTHR11394:SF61">
    <property type="entry name" value="TASTE RECEPTOR TYPE 2 MEMBER 117"/>
    <property type="match status" value="1"/>
</dbReference>
<dbReference type="Pfam" id="PF05296">
    <property type="entry name" value="TAS2R"/>
    <property type="match status" value="1"/>
</dbReference>
<dbReference type="SUPFAM" id="SSF81321">
    <property type="entry name" value="Family A G protein-coupled receptor-like"/>
    <property type="match status" value="1"/>
</dbReference>
<dbReference type="PROSITE" id="PS50262">
    <property type="entry name" value="G_PROTEIN_RECEP_F1_2"/>
    <property type="match status" value="1"/>
</dbReference>